<comment type="function">
    <text evidence="1">Catalyzes the NADPH-dependent reduction of N-acetyl-5-glutamyl phosphate to yield N-acetyl-L-glutamate 5-semialdehyde.</text>
</comment>
<comment type="catalytic activity">
    <reaction evidence="1">
        <text>N-acetyl-L-glutamate 5-semialdehyde + phosphate + NADP(+) = N-acetyl-L-glutamyl 5-phosphate + NADPH + H(+)</text>
        <dbReference type="Rhea" id="RHEA:21588"/>
        <dbReference type="ChEBI" id="CHEBI:15378"/>
        <dbReference type="ChEBI" id="CHEBI:29123"/>
        <dbReference type="ChEBI" id="CHEBI:43474"/>
        <dbReference type="ChEBI" id="CHEBI:57783"/>
        <dbReference type="ChEBI" id="CHEBI:57936"/>
        <dbReference type="ChEBI" id="CHEBI:58349"/>
        <dbReference type="EC" id="1.2.1.38"/>
    </reaction>
</comment>
<comment type="pathway">
    <text evidence="1">Amino-acid biosynthesis; L-arginine biosynthesis; N(2)-acetyl-L-ornithine from L-glutamate: step 3/4.</text>
</comment>
<comment type="subcellular location">
    <subcellularLocation>
        <location evidence="1">Cytoplasm</location>
    </subcellularLocation>
</comment>
<comment type="similarity">
    <text evidence="1">Belongs to the NAGSA dehydrogenase family. Type 1 subfamily.</text>
</comment>
<feature type="chain" id="PRO_0000112386" description="N-acetyl-gamma-glutamyl-phosphate reductase">
    <location>
        <begin position="1"/>
        <end position="322"/>
    </location>
</feature>
<feature type="active site" evidence="1">
    <location>
        <position position="132"/>
    </location>
</feature>
<keyword id="KW-0028">Amino-acid biosynthesis</keyword>
<keyword id="KW-0055">Arginine biosynthesis</keyword>
<keyword id="KW-0963">Cytoplasm</keyword>
<keyword id="KW-0521">NADP</keyword>
<keyword id="KW-0560">Oxidoreductase</keyword>
<keyword id="KW-1185">Reference proteome</keyword>
<sequence>MIKAGIIGGAGYTAGELIRLLLNHPETEIVFINSSSNAGNRITDVHEGLYGETDLRFTDQLPLDAIDVLFFCTAHGDTKKFMESHNVPEDLKIIDLSMDYRIKSDDHDFIYGLPELNRRATCTAKHVANPGCFATCIQLGLLPLAKNLMLTGDVSVNAITGSTGAGVKPGATSHFSWRNNNISIYKAFDHQHVPEIKQSLKQLQNSFDSEIDFIPYRGDFPRGIFATLVVKTKVALEEIVRMYEEYYAKDSFVHIVDKNIDLKQVVNTNKCLIHLEKHGDKLLIISCIDNLLKGASGQAVHNMNLMFNLEETVGLRLKPSAF</sequence>
<name>ARGC_BACTN</name>
<accession>Q8A1A7</accession>
<dbReference type="EC" id="1.2.1.38" evidence="1"/>
<dbReference type="EMBL" id="AE015928">
    <property type="protein sequence ID" value="AAO78864.1"/>
    <property type="molecule type" value="Genomic_DNA"/>
</dbReference>
<dbReference type="RefSeq" id="NP_812670.1">
    <property type="nucleotide sequence ID" value="NC_004663.1"/>
</dbReference>
<dbReference type="RefSeq" id="WP_008762696.1">
    <property type="nucleotide sequence ID" value="NZ_UYXG01000036.1"/>
</dbReference>
<dbReference type="SMR" id="Q8A1A7"/>
<dbReference type="FunCoup" id="Q8A1A7">
    <property type="interactions" value="325"/>
</dbReference>
<dbReference type="STRING" id="226186.BT_3759"/>
<dbReference type="PaxDb" id="226186-BT_3759"/>
<dbReference type="EnsemblBacteria" id="AAO78864">
    <property type="protein sequence ID" value="AAO78864"/>
    <property type="gene ID" value="BT_3759"/>
</dbReference>
<dbReference type="GeneID" id="60924929"/>
<dbReference type="KEGG" id="bth:BT_3759"/>
<dbReference type="PATRIC" id="fig|226186.12.peg.3821"/>
<dbReference type="eggNOG" id="COG0002">
    <property type="taxonomic scope" value="Bacteria"/>
</dbReference>
<dbReference type="HOGENOM" id="CLU_006384_0_1_10"/>
<dbReference type="InParanoid" id="Q8A1A7"/>
<dbReference type="OrthoDB" id="9801289at2"/>
<dbReference type="UniPathway" id="UPA00068">
    <property type="reaction ID" value="UER00108"/>
</dbReference>
<dbReference type="Proteomes" id="UP000001414">
    <property type="component" value="Chromosome"/>
</dbReference>
<dbReference type="GO" id="GO:0005737">
    <property type="term" value="C:cytoplasm"/>
    <property type="evidence" value="ECO:0007669"/>
    <property type="project" value="UniProtKB-SubCell"/>
</dbReference>
<dbReference type="GO" id="GO:0003942">
    <property type="term" value="F:N-acetyl-gamma-glutamyl-phosphate reductase activity"/>
    <property type="evidence" value="ECO:0007669"/>
    <property type="project" value="UniProtKB-UniRule"/>
</dbReference>
<dbReference type="GO" id="GO:0051287">
    <property type="term" value="F:NAD binding"/>
    <property type="evidence" value="ECO:0007669"/>
    <property type="project" value="InterPro"/>
</dbReference>
<dbReference type="GO" id="GO:0070401">
    <property type="term" value="F:NADP+ binding"/>
    <property type="evidence" value="ECO:0007669"/>
    <property type="project" value="InterPro"/>
</dbReference>
<dbReference type="GO" id="GO:0006526">
    <property type="term" value="P:L-arginine biosynthetic process"/>
    <property type="evidence" value="ECO:0007669"/>
    <property type="project" value="UniProtKB-UniRule"/>
</dbReference>
<dbReference type="CDD" id="cd23934">
    <property type="entry name" value="AGPR_1_C"/>
    <property type="match status" value="1"/>
</dbReference>
<dbReference type="CDD" id="cd17895">
    <property type="entry name" value="AGPR_1_N"/>
    <property type="match status" value="1"/>
</dbReference>
<dbReference type="Gene3D" id="3.30.360.10">
    <property type="entry name" value="Dihydrodipicolinate Reductase, domain 2"/>
    <property type="match status" value="1"/>
</dbReference>
<dbReference type="Gene3D" id="3.40.50.720">
    <property type="entry name" value="NAD(P)-binding Rossmann-like Domain"/>
    <property type="match status" value="1"/>
</dbReference>
<dbReference type="HAMAP" id="MF_00150">
    <property type="entry name" value="ArgC_type1"/>
    <property type="match status" value="1"/>
</dbReference>
<dbReference type="InterPro" id="IPR023013">
    <property type="entry name" value="AGPR_AS"/>
</dbReference>
<dbReference type="InterPro" id="IPR000706">
    <property type="entry name" value="AGPR_type-1"/>
</dbReference>
<dbReference type="InterPro" id="IPR036291">
    <property type="entry name" value="NAD(P)-bd_dom_sf"/>
</dbReference>
<dbReference type="InterPro" id="IPR050085">
    <property type="entry name" value="NAGSA_dehydrogenase"/>
</dbReference>
<dbReference type="InterPro" id="IPR000534">
    <property type="entry name" value="Semialdehyde_DH_NAD-bd"/>
</dbReference>
<dbReference type="NCBIfam" id="TIGR01850">
    <property type="entry name" value="argC"/>
    <property type="match status" value="1"/>
</dbReference>
<dbReference type="PANTHER" id="PTHR32338:SF10">
    <property type="entry name" value="N-ACETYL-GAMMA-GLUTAMYL-PHOSPHATE REDUCTASE, CHLOROPLASTIC-RELATED"/>
    <property type="match status" value="1"/>
</dbReference>
<dbReference type="PANTHER" id="PTHR32338">
    <property type="entry name" value="N-ACETYL-GAMMA-GLUTAMYL-PHOSPHATE REDUCTASE, CHLOROPLASTIC-RELATED-RELATED"/>
    <property type="match status" value="1"/>
</dbReference>
<dbReference type="Pfam" id="PF01118">
    <property type="entry name" value="Semialdhyde_dh"/>
    <property type="match status" value="1"/>
</dbReference>
<dbReference type="Pfam" id="PF22698">
    <property type="entry name" value="Semialdhyde_dhC_1"/>
    <property type="match status" value="1"/>
</dbReference>
<dbReference type="SMART" id="SM00859">
    <property type="entry name" value="Semialdhyde_dh"/>
    <property type="match status" value="1"/>
</dbReference>
<dbReference type="SUPFAM" id="SSF55347">
    <property type="entry name" value="Glyceraldehyde-3-phosphate dehydrogenase-like, C-terminal domain"/>
    <property type="match status" value="1"/>
</dbReference>
<dbReference type="SUPFAM" id="SSF51735">
    <property type="entry name" value="NAD(P)-binding Rossmann-fold domains"/>
    <property type="match status" value="1"/>
</dbReference>
<dbReference type="PROSITE" id="PS01224">
    <property type="entry name" value="ARGC"/>
    <property type="match status" value="1"/>
</dbReference>
<evidence type="ECO:0000255" key="1">
    <source>
        <dbReference type="HAMAP-Rule" id="MF_00150"/>
    </source>
</evidence>
<organism>
    <name type="scientific">Bacteroides thetaiotaomicron (strain ATCC 29148 / DSM 2079 / JCM 5827 / CCUG 10774 / NCTC 10582 / VPI-5482 / E50)</name>
    <dbReference type="NCBI Taxonomy" id="226186"/>
    <lineage>
        <taxon>Bacteria</taxon>
        <taxon>Pseudomonadati</taxon>
        <taxon>Bacteroidota</taxon>
        <taxon>Bacteroidia</taxon>
        <taxon>Bacteroidales</taxon>
        <taxon>Bacteroidaceae</taxon>
        <taxon>Bacteroides</taxon>
    </lineage>
</organism>
<gene>
    <name evidence="1" type="primary">argC</name>
    <name type="ordered locus">BT_3759</name>
</gene>
<reference key="1">
    <citation type="journal article" date="2003" name="Science">
        <title>A genomic view of the human-Bacteroides thetaiotaomicron symbiosis.</title>
        <authorList>
            <person name="Xu J."/>
            <person name="Bjursell M.K."/>
            <person name="Himrod J."/>
            <person name="Deng S."/>
            <person name="Carmichael L.K."/>
            <person name="Chiang H.C."/>
            <person name="Hooper L.V."/>
            <person name="Gordon J.I."/>
        </authorList>
    </citation>
    <scope>NUCLEOTIDE SEQUENCE [LARGE SCALE GENOMIC DNA]</scope>
    <source>
        <strain>ATCC 29148 / DSM 2079 / JCM 5827 / CCUG 10774 / NCTC 10582 / VPI-5482 / E50</strain>
    </source>
</reference>
<protein>
    <recommendedName>
        <fullName evidence="1">N-acetyl-gamma-glutamyl-phosphate reductase</fullName>
        <shortName evidence="1">AGPR</shortName>
        <ecNumber evidence="1">1.2.1.38</ecNumber>
    </recommendedName>
    <alternativeName>
        <fullName evidence="1">N-acetyl-glutamate semialdehyde dehydrogenase</fullName>
        <shortName evidence="1">NAGSA dehydrogenase</shortName>
    </alternativeName>
</protein>
<proteinExistence type="inferred from homology"/>